<reference key="1">
    <citation type="submission" date="2007-07" db="EMBL/GenBank/DDBJ databases">
        <title>Complete sequence of chromosome of Xanthobacter autotrophicus Py2.</title>
        <authorList>
            <consortium name="US DOE Joint Genome Institute"/>
            <person name="Copeland A."/>
            <person name="Lucas S."/>
            <person name="Lapidus A."/>
            <person name="Barry K."/>
            <person name="Glavina del Rio T."/>
            <person name="Hammon N."/>
            <person name="Israni S."/>
            <person name="Dalin E."/>
            <person name="Tice H."/>
            <person name="Pitluck S."/>
            <person name="Sims D."/>
            <person name="Brettin T."/>
            <person name="Bruce D."/>
            <person name="Detter J.C."/>
            <person name="Han C."/>
            <person name="Tapia R."/>
            <person name="Brainard J."/>
            <person name="Schmutz J."/>
            <person name="Larimer F."/>
            <person name="Land M."/>
            <person name="Hauser L."/>
            <person name="Kyrpides N."/>
            <person name="Kim E."/>
            <person name="Ensigns S.A."/>
            <person name="Richardson P."/>
        </authorList>
    </citation>
    <scope>NUCLEOTIDE SEQUENCE [LARGE SCALE GENOMIC DNA]</scope>
    <source>
        <strain>ATCC BAA-1158 / Py2</strain>
    </source>
</reference>
<organism>
    <name type="scientific">Xanthobacter autotrophicus (strain ATCC BAA-1158 / Py2)</name>
    <dbReference type="NCBI Taxonomy" id="78245"/>
    <lineage>
        <taxon>Bacteria</taxon>
        <taxon>Pseudomonadati</taxon>
        <taxon>Pseudomonadota</taxon>
        <taxon>Alphaproteobacteria</taxon>
        <taxon>Hyphomicrobiales</taxon>
        <taxon>Xanthobacteraceae</taxon>
        <taxon>Xanthobacter</taxon>
    </lineage>
</organism>
<comment type="catalytic activity">
    <reaction evidence="1">
        <text>1-(5-phospho-beta-D-ribosyl)-5-[(5-phospho-beta-D-ribosylamino)methylideneamino]imidazole-4-carboxamide = 5-[(5-phospho-1-deoxy-D-ribulos-1-ylimino)methylamino]-1-(5-phospho-beta-D-ribosyl)imidazole-4-carboxamide</text>
        <dbReference type="Rhea" id="RHEA:15469"/>
        <dbReference type="ChEBI" id="CHEBI:58435"/>
        <dbReference type="ChEBI" id="CHEBI:58525"/>
        <dbReference type="EC" id="5.3.1.16"/>
    </reaction>
</comment>
<comment type="pathway">
    <text evidence="1">Amino-acid biosynthesis; L-histidine biosynthesis; L-histidine from 5-phospho-alpha-D-ribose 1-diphosphate: step 4/9.</text>
</comment>
<comment type="subcellular location">
    <subcellularLocation>
        <location evidence="1">Cytoplasm</location>
    </subcellularLocation>
</comment>
<comment type="similarity">
    <text evidence="1">Belongs to the HisA/HisF family.</text>
</comment>
<keyword id="KW-0028">Amino-acid biosynthesis</keyword>
<keyword id="KW-0963">Cytoplasm</keyword>
<keyword id="KW-0368">Histidine biosynthesis</keyword>
<keyword id="KW-0413">Isomerase</keyword>
<keyword id="KW-1185">Reference proteome</keyword>
<name>HIS4_XANP2</name>
<gene>
    <name evidence="1" type="primary">hisA</name>
    <name type="ordered locus">Xaut_2290</name>
</gene>
<accession>A7IHP0</accession>
<protein>
    <recommendedName>
        <fullName evidence="1">1-(5-phosphoribosyl)-5-[(5-phosphoribosylamino)methylideneamino] imidazole-4-carboxamide isomerase</fullName>
        <ecNumber evidence="1">5.3.1.16</ecNumber>
    </recommendedName>
    <alternativeName>
        <fullName evidence="1">Phosphoribosylformimino-5-aminoimidazole carboxamide ribotide isomerase</fullName>
    </alternativeName>
</protein>
<sequence length="245" mass="25743">MASVILFPAIDLKDGLAVRLEQGDMARATVFNRDPAAQAAEFETLGFRYLHLVDLDGAFAGKPVNAAAVERILETVSIPVQLGGGIRDLKTVEAWLEKGVTRVILGTAAVRDPDFVKQAAKAHPGRIVVGLDARDGRVAVEGWAETSDIAAVDIAKRFEDAGVTAIIYTDIARDGLLKGLNLDATVALAEAVNLPVIASGGLASLADIEALLTPRAKKLEGAITGRALYDGRLDAREALALVAGR</sequence>
<feature type="chain" id="PRO_1000190569" description="1-(5-phosphoribosyl)-5-[(5-phosphoribosylamino)methylideneamino] imidazole-4-carboxamide isomerase">
    <location>
        <begin position="1"/>
        <end position="245"/>
    </location>
</feature>
<feature type="active site" description="Proton acceptor" evidence="1">
    <location>
        <position position="11"/>
    </location>
</feature>
<feature type="active site" description="Proton donor" evidence="1">
    <location>
        <position position="132"/>
    </location>
</feature>
<dbReference type="EC" id="5.3.1.16" evidence="1"/>
<dbReference type="EMBL" id="CP000781">
    <property type="protein sequence ID" value="ABS67533.1"/>
    <property type="molecule type" value="Genomic_DNA"/>
</dbReference>
<dbReference type="SMR" id="A7IHP0"/>
<dbReference type="STRING" id="78245.Xaut_2290"/>
<dbReference type="KEGG" id="xau:Xaut_2290"/>
<dbReference type="eggNOG" id="COG0106">
    <property type="taxonomic scope" value="Bacteria"/>
</dbReference>
<dbReference type="HOGENOM" id="CLU_048577_1_1_5"/>
<dbReference type="OrthoDB" id="9807749at2"/>
<dbReference type="PhylomeDB" id="A7IHP0"/>
<dbReference type="UniPathway" id="UPA00031">
    <property type="reaction ID" value="UER00009"/>
</dbReference>
<dbReference type="Proteomes" id="UP000002417">
    <property type="component" value="Chromosome"/>
</dbReference>
<dbReference type="GO" id="GO:0005737">
    <property type="term" value="C:cytoplasm"/>
    <property type="evidence" value="ECO:0007669"/>
    <property type="project" value="UniProtKB-SubCell"/>
</dbReference>
<dbReference type="GO" id="GO:0003949">
    <property type="term" value="F:1-(5-phosphoribosyl)-5-[(5-phosphoribosylamino)methylideneamino]imidazole-4-carboxamide isomerase activity"/>
    <property type="evidence" value="ECO:0007669"/>
    <property type="project" value="UniProtKB-UniRule"/>
</dbReference>
<dbReference type="GO" id="GO:0000105">
    <property type="term" value="P:L-histidine biosynthetic process"/>
    <property type="evidence" value="ECO:0007669"/>
    <property type="project" value="UniProtKB-UniRule"/>
</dbReference>
<dbReference type="GO" id="GO:0000162">
    <property type="term" value="P:L-tryptophan biosynthetic process"/>
    <property type="evidence" value="ECO:0007669"/>
    <property type="project" value="TreeGrafter"/>
</dbReference>
<dbReference type="CDD" id="cd04732">
    <property type="entry name" value="HisA"/>
    <property type="match status" value="1"/>
</dbReference>
<dbReference type="FunFam" id="3.20.20.70:FF:000009">
    <property type="entry name" value="1-(5-phosphoribosyl)-5-[(5-phosphoribosylamino)methylideneamino] imidazole-4-carboxamide isomerase"/>
    <property type="match status" value="1"/>
</dbReference>
<dbReference type="Gene3D" id="3.20.20.70">
    <property type="entry name" value="Aldolase class I"/>
    <property type="match status" value="1"/>
</dbReference>
<dbReference type="HAMAP" id="MF_01014">
    <property type="entry name" value="HisA"/>
    <property type="match status" value="1"/>
</dbReference>
<dbReference type="InterPro" id="IPR013785">
    <property type="entry name" value="Aldolase_TIM"/>
</dbReference>
<dbReference type="InterPro" id="IPR006062">
    <property type="entry name" value="His_biosynth"/>
</dbReference>
<dbReference type="InterPro" id="IPR006063">
    <property type="entry name" value="HisA_bact_arch"/>
</dbReference>
<dbReference type="InterPro" id="IPR044524">
    <property type="entry name" value="Isoase_HisA-like"/>
</dbReference>
<dbReference type="InterPro" id="IPR023016">
    <property type="entry name" value="Isoase_HisA-like_bact"/>
</dbReference>
<dbReference type="InterPro" id="IPR011060">
    <property type="entry name" value="RibuloseP-bd_barrel"/>
</dbReference>
<dbReference type="NCBIfam" id="TIGR00007">
    <property type="entry name" value="1-(5-phosphoribosyl)-5-[(5-phosphoribosylamino)methylideneamino]imidazole-4-carboxamide isomerase"/>
    <property type="match status" value="1"/>
</dbReference>
<dbReference type="NCBIfam" id="NF010112">
    <property type="entry name" value="PRK13585.1"/>
    <property type="match status" value="1"/>
</dbReference>
<dbReference type="PANTHER" id="PTHR43090">
    <property type="entry name" value="1-(5-PHOSPHORIBOSYL)-5-[(5-PHOSPHORIBOSYLAMINO)METHYLIDENEAMINO] IMIDAZOLE-4-CARBOXAMIDE ISOMERASE"/>
    <property type="match status" value="1"/>
</dbReference>
<dbReference type="PANTHER" id="PTHR43090:SF2">
    <property type="entry name" value="1-(5-PHOSPHORIBOSYL)-5-[(5-PHOSPHORIBOSYLAMINO)METHYLIDENEAMINO] IMIDAZOLE-4-CARBOXAMIDE ISOMERASE"/>
    <property type="match status" value="1"/>
</dbReference>
<dbReference type="Pfam" id="PF00977">
    <property type="entry name" value="His_biosynth"/>
    <property type="match status" value="1"/>
</dbReference>
<dbReference type="SUPFAM" id="SSF51366">
    <property type="entry name" value="Ribulose-phoshate binding barrel"/>
    <property type="match status" value="1"/>
</dbReference>
<proteinExistence type="inferred from homology"/>
<evidence type="ECO:0000255" key="1">
    <source>
        <dbReference type="HAMAP-Rule" id="MF_01014"/>
    </source>
</evidence>